<proteinExistence type="inferred from homology"/>
<reference key="1">
    <citation type="journal article" date="2000" name="Nature">
        <title>The genome sequence of the food-borne pathogen Campylobacter jejuni reveals hypervariable sequences.</title>
        <authorList>
            <person name="Parkhill J."/>
            <person name="Wren B.W."/>
            <person name="Mungall K.L."/>
            <person name="Ketley J.M."/>
            <person name="Churcher C.M."/>
            <person name="Basham D."/>
            <person name="Chillingworth T."/>
            <person name="Davies R.M."/>
            <person name="Feltwell T."/>
            <person name="Holroyd S."/>
            <person name="Jagels K."/>
            <person name="Karlyshev A.V."/>
            <person name="Moule S."/>
            <person name="Pallen M.J."/>
            <person name="Penn C.W."/>
            <person name="Quail M.A."/>
            <person name="Rajandream M.A."/>
            <person name="Rutherford K.M."/>
            <person name="van Vliet A.H.M."/>
            <person name="Whitehead S."/>
            <person name="Barrell B.G."/>
        </authorList>
    </citation>
    <scope>NUCLEOTIDE SEQUENCE [LARGE SCALE GENOMIC DNA]</scope>
    <source>
        <strain>ATCC 700819 / NCTC 11168</strain>
    </source>
</reference>
<name>RS3_CAMJE</name>
<evidence type="ECO:0000255" key="1">
    <source>
        <dbReference type="HAMAP-Rule" id="MF_01309"/>
    </source>
</evidence>
<evidence type="ECO:0000256" key="2">
    <source>
        <dbReference type="SAM" id="MobiDB-lite"/>
    </source>
</evidence>
<evidence type="ECO:0000305" key="3"/>
<keyword id="KW-1185">Reference proteome</keyword>
<keyword id="KW-0687">Ribonucleoprotein</keyword>
<keyword id="KW-0689">Ribosomal protein</keyword>
<keyword id="KW-0694">RNA-binding</keyword>
<keyword id="KW-0699">rRNA-binding</keyword>
<accession>Q9PLX7</accession>
<accession>Q0P7T0</accession>
<dbReference type="EMBL" id="AL111168">
    <property type="protein sequence ID" value="CAL35795.1"/>
    <property type="molecule type" value="Genomic_DNA"/>
</dbReference>
<dbReference type="PIR" id="A81268">
    <property type="entry name" value="A81268"/>
</dbReference>
<dbReference type="RefSeq" id="WP_002851138.1">
    <property type="nucleotide sequence ID" value="NZ_SZUC01000002.1"/>
</dbReference>
<dbReference type="RefSeq" id="YP_002345067.1">
    <property type="nucleotide sequence ID" value="NC_002163.1"/>
</dbReference>
<dbReference type="SMR" id="Q9PLX7"/>
<dbReference type="IntAct" id="Q9PLX7">
    <property type="interactions" value="1"/>
</dbReference>
<dbReference type="STRING" id="192222.Cj1701c"/>
<dbReference type="PaxDb" id="192222-Cj1701c"/>
<dbReference type="EnsemblBacteria" id="CAL35795">
    <property type="protein sequence ID" value="CAL35795"/>
    <property type="gene ID" value="Cj1701c"/>
</dbReference>
<dbReference type="GeneID" id="905975"/>
<dbReference type="KEGG" id="cje:Cj1701c"/>
<dbReference type="PATRIC" id="fig|192222.6.peg.1675"/>
<dbReference type="eggNOG" id="COG0092">
    <property type="taxonomic scope" value="Bacteria"/>
</dbReference>
<dbReference type="HOGENOM" id="CLU_058591_0_2_7"/>
<dbReference type="OrthoDB" id="9806396at2"/>
<dbReference type="Proteomes" id="UP000000799">
    <property type="component" value="Chromosome"/>
</dbReference>
<dbReference type="GO" id="GO:0022627">
    <property type="term" value="C:cytosolic small ribosomal subunit"/>
    <property type="evidence" value="ECO:0007669"/>
    <property type="project" value="TreeGrafter"/>
</dbReference>
<dbReference type="GO" id="GO:0003729">
    <property type="term" value="F:mRNA binding"/>
    <property type="evidence" value="ECO:0007669"/>
    <property type="project" value="UniProtKB-UniRule"/>
</dbReference>
<dbReference type="GO" id="GO:0019843">
    <property type="term" value="F:rRNA binding"/>
    <property type="evidence" value="ECO:0007669"/>
    <property type="project" value="UniProtKB-UniRule"/>
</dbReference>
<dbReference type="GO" id="GO:0003735">
    <property type="term" value="F:structural constituent of ribosome"/>
    <property type="evidence" value="ECO:0007669"/>
    <property type="project" value="InterPro"/>
</dbReference>
<dbReference type="GO" id="GO:0006412">
    <property type="term" value="P:translation"/>
    <property type="evidence" value="ECO:0007669"/>
    <property type="project" value="UniProtKB-UniRule"/>
</dbReference>
<dbReference type="CDD" id="cd02412">
    <property type="entry name" value="KH-II_30S_S3"/>
    <property type="match status" value="1"/>
</dbReference>
<dbReference type="FunFam" id="3.30.1140.32:FF:000006">
    <property type="entry name" value="30S ribosomal protein S3"/>
    <property type="match status" value="1"/>
</dbReference>
<dbReference type="FunFam" id="3.30.300.20:FF:000001">
    <property type="entry name" value="30S ribosomal protein S3"/>
    <property type="match status" value="1"/>
</dbReference>
<dbReference type="Gene3D" id="3.30.300.20">
    <property type="match status" value="1"/>
</dbReference>
<dbReference type="Gene3D" id="3.30.1140.32">
    <property type="entry name" value="Ribosomal protein S3, C-terminal domain"/>
    <property type="match status" value="1"/>
</dbReference>
<dbReference type="HAMAP" id="MF_01309_B">
    <property type="entry name" value="Ribosomal_uS3_B"/>
    <property type="match status" value="1"/>
</dbReference>
<dbReference type="InterPro" id="IPR004087">
    <property type="entry name" value="KH_dom"/>
</dbReference>
<dbReference type="InterPro" id="IPR015946">
    <property type="entry name" value="KH_dom-like_a/b"/>
</dbReference>
<dbReference type="InterPro" id="IPR004044">
    <property type="entry name" value="KH_dom_type_2"/>
</dbReference>
<dbReference type="InterPro" id="IPR009019">
    <property type="entry name" value="KH_sf_prok-type"/>
</dbReference>
<dbReference type="InterPro" id="IPR036419">
    <property type="entry name" value="Ribosomal_S3_C_sf"/>
</dbReference>
<dbReference type="InterPro" id="IPR005704">
    <property type="entry name" value="Ribosomal_uS3_bac-typ"/>
</dbReference>
<dbReference type="InterPro" id="IPR001351">
    <property type="entry name" value="Ribosomal_uS3_C"/>
</dbReference>
<dbReference type="InterPro" id="IPR018280">
    <property type="entry name" value="Ribosomal_uS3_CS"/>
</dbReference>
<dbReference type="NCBIfam" id="TIGR01009">
    <property type="entry name" value="rpsC_bact"/>
    <property type="match status" value="1"/>
</dbReference>
<dbReference type="PANTHER" id="PTHR11760">
    <property type="entry name" value="30S/40S RIBOSOMAL PROTEIN S3"/>
    <property type="match status" value="1"/>
</dbReference>
<dbReference type="PANTHER" id="PTHR11760:SF19">
    <property type="entry name" value="SMALL RIBOSOMAL SUBUNIT PROTEIN US3C"/>
    <property type="match status" value="1"/>
</dbReference>
<dbReference type="Pfam" id="PF07650">
    <property type="entry name" value="KH_2"/>
    <property type="match status" value="1"/>
</dbReference>
<dbReference type="Pfam" id="PF00189">
    <property type="entry name" value="Ribosomal_S3_C"/>
    <property type="match status" value="1"/>
</dbReference>
<dbReference type="SMART" id="SM00322">
    <property type="entry name" value="KH"/>
    <property type="match status" value="1"/>
</dbReference>
<dbReference type="SUPFAM" id="SSF54814">
    <property type="entry name" value="Prokaryotic type KH domain (KH-domain type II)"/>
    <property type="match status" value="1"/>
</dbReference>
<dbReference type="SUPFAM" id="SSF54821">
    <property type="entry name" value="Ribosomal protein S3 C-terminal domain"/>
    <property type="match status" value="1"/>
</dbReference>
<dbReference type="PROSITE" id="PS50823">
    <property type="entry name" value="KH_TYPE_2"/>
    <property type="match status" value="1"/>
</dbReference>
<dbReference type="PROSITE" id="PS00548">
    <property type="entry name" value="RIBOSOMAL_S3"/>
    <property type="match status" value="1"/>
</dbReference>
<feature type="chain" id="PRO_0000130093" description="Small ribosomal subunit protein uS3">
    <location>
        <begin position="1"/>
        <end position="233"/>
    </location>
</feature>
<feature type="domain" description="KH type-2" evidence="1">
    <location>
        <begin position="39"/>
        <end position="107"/>
    </location>
</feature>
<feature type="region of interest" description="Disordered" evidence="2">
    <location>
        <begin position="212"/>
        <end position="233"/>
    </location>
</feature>
<feature type="compositionally biased region" description="Basic and acidic residues" evidence="2">
    <location>
        <begin position="212"/>
        <end position="222"/>
    </location>
</feature>
<feature type="compositionally biased region" description="Basic residues" evidence="2">
    <location>
        <begin position="224"/>
        <end position="233"/>
    </location>
</feature>
<protein>
    <recommendedName>
        <fullName evidence="1">Small ribosomal subunit protein uS3</fullName>
    </recommendedName>
    <alternativeName>
        <fullName evidence="3">30S ribosomal protein S3</fullName>
    </alternativeName>
</protein>
<sequence>MGQKVNPIGLRLGINRNWESRWFPTKANLVENIGEDYKIRAFLKRKLYYAGISQILVERTAKKLRVTVVAARPGIIIGKKGSDVDNLRKELQDLIGKDVNINIKEERKAGASAQLAAESVATQLEKRIAFRRAMKKVIQGAQKAGAKGIKVSVSGRLGGAEMARTEWYLEGRVPLHTLRAKIDYGFAEARTTYGNIGVKVWIFKGEVLHKGMQPEKTEESAPAKKPRRTRRGK</sequence>
<gene>
    <name evidence="1" type="primary">rpsC</name>
    <name type="ordered locus">Cj1701c</name>
</gene>
<comment type="function">
    <text evidence="1">Binds the lower part of the 30S subunit head. Binds mRNA in the 70S ribosome, positioning it for translation.</text>
</comment>
<comment type="subunit">
    <text evidence="1">Part of the 30S ribosomal subunit. Forms a tight complex with proteins S10 and S14.</text>
</comment>
<comment type="similarity">
    <text evidence="1">Belongs to the universal ribosomal protein uS3 family.</text>
</comment>
<organism>
    <name type="scientific">Campylobacter jejuni subsp. jejuni serotype O:2 (strain ATCC 700819 / NCTC 11168)</name>
    <dbReference type="NCBI Taxonomy" id="192222"/>
    <lineage>
        <taxon>Bacteria</taxon>
        <taxon>Pseudomonadati</taxon>
        <taxon>Campylobacterota</taxon>
        <taxon>Epsilonproteobacteria</taxon>
        <taxon>Campylobacterales</taxon>
        <taxon>Campylobacteraceae</taxon>
        <taxon>Campylobacter</taxon>
    </lineage>
</organism>